<organism>
    <name type="scientific">Caenorhabditis elegans</name>
    <dbReference type="NCBI Taxonomy" id="6239"/>
    <lineage>
        <taxon>Eukaryota</taxon>
        <taxon>Metazoa</taxon>
        <taxon>Ecdysozoa</taxon>
        <taxon>Nematoda</taxon>
        <taxon>Chromadorea</taxon>
        <taxon>Rhabditida</taxon>
        <taxon>Rhabditina</taxon>
        <taxon>Rhabditomorpha</taxon>
        <taxon>Rhabditoidea</taxon>
        <taxon>Rhabditidae</taxon>
        <taxon>Peloderinae</taxon>
        <taxon>Caenorhabditis</taxon>
    </lineage>
</organism>
<gene>
    <name type="ORF">F26F2.7</name>
</gene>
<sequence>MNNVPSTSRENSRNPSESSSSIQDLLINVEANDLSSVVNEDVSITMSAPPSPATPRKIDFSAEIETPKSTGIRRRLTLKDSIGSDLENDPESTPAIRKPSRISYDERLTVICDSQTSSPLQTPSPSQERDSAPFADVFQPKGFFSFFWEELTRGYSLHNDHARFSEKRRKVYAFLRIPLELEQFLTYGLLQCIDAFFYLFTFLPLRFLMSIFGALLRIKRWTSAETCDFLKVVIIVAASMLIREIDSSFLYHQVRSQGVIKLYIFYNMLEVADRLFSSLGQDIFDALLWTANSEKRFSVGYFIRTCGHLIVAILYATLHSFLVILQATTLNVAFNSHNQTVLAIMMSNNFVELKGSVFKKFAKANLFQMACSDVRERFHIFALLFVVMIRNMTAVNWNIDSFTEMIPDIIMVVGCEYFVDWLKHAFITKFNEINAEVYKDFTITIAFDVIRSRDQSAFSDYSDQVSRRMGFIPIPLSIMIIRVLSQTFTLDNWGSCIIFGIGWLLVFAVKICNGVVMLGQACHHVKRFRDIQARAEFELFRKRMVEKKSKSAPNSPRMSLIDFTDVLHQPAAGKGFTVSDMLSQWEELQPSLLSSEIRRSTDRETAVSHLTARSDERTPRRAVSMAHIPRRDRSEPPPAPSMDQDPQLDTEDPVVTENNTNSNSEQASPVKKKTTAAPVTSSASTNTNATSSDELADVTAYKMPEQGVQRIE</sequence>
<reference key="1">
    <citation type="journal article" date="1998" name="Science">
        <title>Genome sequence of the nematode C. elegans: a platform for investigating biology.</title>
        <authorList>
            <consortium name="The C. elegans sequencing consortium"/>
        </authorList>
    </citation>
    <scope>NUCLEOTIDE SEQUENCE [LARGE SCALE GENOMIC DNA]</scope>
    <source>
        <strain>Bristol N2</strain>
    </source>
</reference>
<evidence type="ECO:0000255" key="1"/>
<evidence type="ECO:0000256" key="2">
    <source>
        <dbReference type="SAM" id="MobiDB-lite"/>
    </source>
</evidence>
<evidence type="ECO:0000305" key="3"/>
<comment type="subcellular location">
    <subcellularLocation>
        <location evidence="3">Membrane</location>
        <topology evidence="3">Multi-pass membrane protein</topology>
    </subcellularLocation>
</comment>
<comment type="similarity">
    <text evidence="3">Belongs to the TAPT1 family.</text>
</comment>
<keyword id="KW-0472">Membrane</keyword>
<keyword id="KW-1185">Reference proteome</keyword>
<keyword id="KW-0812">Transmembrane</keyword>
<keyword id="KW-1133">Transmembrane helix</keyword>
<name>TAPT1_CAEEL</name>
<accession>Q9U3H8</accession>
<dbReference type="EMBL" id="Z81514">
    <property type="protein sequence ID" value="CAB62802.1"/>
    <property type="molecule type" value="Genomic_DNA"/>
</dbReference>
<dbReference type="RefSeq" id="NP_507972.1">
    <property type="nucleotide sequence ID" value="NM_075571.6"/>
</dbReference>
<dbReference type="FunCoup" id="Q9U3H8">
    <property type="interactions" value="2437"/>
</dbReference>
<dbReference type="STRING" id="6239.F26F2.7b.1"/>
<dbReference type="PaxDb" id="6239-F26F2.7"/>
<dbReference type="PeptideAtlas" id="Q9U3H8"/>
<dbReference type="EnsemblMetazoa" id="F26F2.7a.1">
    <property type="protein sequence ID" value="F26F2.7a.1"/>
    <property type="gene ID" value="WBGene00009172"/>
</dbReference>
<dbReference type="GeneID" id="180347"/>
<dbReference type="KEGG" id="cel:CELE_F26F2.7"/>
<dbReference type="UCSC" id="F26F2.7">
    <property type="organism name" value="c. elegans"/>
</dbReference>
<dbReference type="AGR" id="WB:WBGene00009172"/>
<dbReference type="CTD" id="180347"/>
<dbReference type="WormBase" id="F26F2.7a">
    <property type="protein sequence ID" value="CE19819"/>
    <property type="gene ID" value="WBGene00009172"/>
</dbReference>
<dbReference type="eggNOG" id="KOG2490">
    <property type="taxonomic scope" value="Eukaryota"/>
</dbReference>
<dbReference type="GeneTree" id="ENSGT00390000010628"/>
<dbReference type="HOGENOM" id="CLU_361018_0_0_1"/>
<dbReference type="InParanoid" id="Q9U3H8"/>
<dbReference type="OMA" id="PNSPRMS"/>
<dbReference type="OrthoDB" id="29023at2759"/>
<dbReference type="PhylomeDB" id="Q9U3H8"/>
<dbReference type="PRO" id="PR:Q9U3H8"/>
<dbReference type="Proteomes" id="UP000001940">
    <property type="component" value="Chromosome V"/>
</dbReference>
<dbReference type="Bgee" id="WBGene00009172">
    <property type="expression patterns" value="Expressed in adult organism and 4 other cell types or tissues"/>
</dbReference>
<dbReference type="ExpressionAtlas" id="Q9U3H8">
    <property type="expression patterns" value="baseline and differential"/>
</dbReference>
<dbReference type="GO" id="GO:0036064">
    <property type="term" value="C:ciliary basal body"/>
    <property type="evidence" value="ECO:0000318"/>
    <property type="project" value="GO_Central"/>
</dbReference>
<dbReference type="GO" id="GO:0005789">
    <property type="term" value="C:endoplasmic reticulum membrane"/>
    <property type="evidence" value="ECO:0000318"/>
    <property type="project" value="GO_Central"/>
</dbReference>
<dbReference type="GO" id="GO:0045724">
    <property type="term" value="P:positive regulation of cilium assembly"/>
    <property type="evidence" value="ECO:0000318"/>
    <property type="project" value="GO_Central"/>
</dbReference>
<dbReference type="InterPro" id="IPR008010">
    <property type="entry name" value="Tatp1"/>
</dbReference>
<dbReference type="PANTHER" id="PTHR13317">
    <property type="entry name" value="TRANSMEMBRANE ANTERIOR POSTERIOR TRANSFORMATION PROTEIN 1 HOMOLOG"/>
    <property type="match status" value="1"/>
</dbReference>
<dbReference type="PANTHER" id="PTHR13317:SF4">
    <property type="entry name" value="TRANSMEMBRANE ANTERIOR POSTERIOR TRANSFORMATION PROTEIN 1 HOMOLOG"/>
    <property type="match status" value="1"/>
</dbReference>
<dbReference type="Pfam" id="PF05346">
    <property type="entry name" value="DUF747"/>
    <property type="match status" value="1"/>
</dbReference>
<feature type="chain" id="PRO_0000328877" description="Protein TAPT1 homolog">
    <location>
        <begin position="1"/>
        <end position="712"/>
    </location>
</feature>
<feature type="transmembrane region" description="Helical" evidence="1">
    <location>
        <begin position="196"/>
        <end position="216"/>
    </location>
</feature>
<feature type="transmembrane region" description="Helical" evidence="1">
    <location>
        <begin position="222"/>
        <end position="242"/>
    </location>
</feature>
<feature type="transmembrane region" description="Helical" evidence="1">
    <location>
        <begin position="305"/>
        <end position="325"/>
    </location>
</feature>
<feature type="transmembrane region" description="Helical" evidence="1">
    <location>
        <begin position="379"/>
        <end position="399"/>
    </location>
</feature>
<feature type="transmembrane region" description="Helical" evidence="1">
    <location>
        <begin position="402"/>
        <end position="422"/>
    </location>
</feature>
<feature type="transmembrane region" description="Helical" evidence="1">
    <location>
        <begin position="470"/>
        <end position="490"/>
    </location>
</feature>
<feature type="transmembrane region" description="Helical" evidence="1">
    <location>
        <begin position="497"/>
        <end position="517"/>
    </location>
</feature>
<feature type="region of interest" description="Disordered" evidence="2">
    <location>
        <begin position="1"/>
        <end position="22"/>
    </location>
</feature>
<feature type="region of interest" description="Disordered" evidence="2">
    <location>
        <begin position="44"/>
        <end position="66"/>
    </location>
</feature>
<feature type="region of interest" description="Disordered" evidence="2">
    <location>
        <begin position="596"/>
        <end position="712"/>
    </location>
</feature>
<feature type="compositionally biased region" description="Low complexity" evidence="2">
    <location>
        <begin position="1"/>
        <end position="21"/>
    </location>
</feature>
<feature type="compositionally biased region" description="Basic and acidic residues" evidence="2">
    <location>
        <begin position="596"/>
        <end position="619"/>
    </location>
</feature>
<feature type="compositionally biased region" description="Polar residues" evidence="2">
    <location>
        <begin position="656"/>
        <end position="667"/>
    </location>
</feature>
<feature type="compositionally biased region" description="Low complexity" evidence="2">
    <location>
        <begin position="675"/>
        <end position="692"/>
    </location>
</feature>
<protein>
    <recommendedName>
        <fullName>Protein TAPT1 homolog</fullName>
    </recommendedName>
</protein>
<proteinExistence type="inferred from homology"/>